<proteinExistence type="evidence at protein level"/>
<dbReference type="EC" id="5.5.1.-" evidence="5"/>
<dbReference type="EC" id="4.2.3.-" evidence="5"/>
<dbReference type="EMBL" id="MG764077">
    <property type="protein sequence ID" value="AVA16672.1"/>
    <property type="molecule type" value="mRNA"/>
</dbReference>
<dbReference type="SMR" id="A0A2L0VXR0"/>
<dbReference type="UniPathway" id="UPA00213"/>
<dbReference type="GO" id="GO:0016853">
    <property type="term" value="F:isomerase activity"/>
    <property type="evidence" value="ECO:0007669"/>
    <property type="project" value="UniProtKB-KW"/>
</dbReference>
<dbReference type="GO" id="GO:0000287">
    <property type="term" value="F:magnesium ion binding"/>
    <property type="evidence" value="ECO:0007669"/>
    <property type="project" value="TreeGrafter"/>
</dbReference>
<dbReference type="GO" id="GO:0010333">
    <property type="term" value="F:terpene synthase activity"/>
    <property type="evidence" value="ECO:0007669"/>
    <property type="project" value="InterPro"/>
</dbReference>
<dbReference type="GO" id="GO:0017000">
    <property type="term" value="P:antibiotic biosynthetic process"/>
    <property type="evidence" value="ECO:0007669"/>
    <property type="project" value="UniProtKB-KW"/>
</dbReference>
<dbReference type="GO" id="GO:0016102">
    <property type="term" value="P:diterpenoid biosynthetic process"/>
    <property type="evidence" value="ECO:0007669"/>
    <property type="project" value="TreeGrafter"/>
</dbReference>
<dbReference type="Gene3D" id="1.50.10.160">
    <property type="match status" value="1"/>
</dbReference>
<dbReference type="Gene3D" id="1.50.10.20">
    <property type="match status" value="1"/>
</dbReference>
<dbReference type="InterPro" id="IPR050148">
    <property type="entry name" value="Terpene_synthase-like"/>
</dbReference>
<dbReference type="InterPro" id="IPR008930">
    <property type="entry name" value="Terpenoid_cyclase/PrenylTrfase"/>
</dbReference>
<dbReference type="PANTHER" id="PTHR31739:SF25">
    <property type="entry name" value="(E,E)-GERANYLLINALOOL SYNTHASE"/>
    <property type="match status" value="1"/>
</dbReference>
<dbReference type="PANTHER" id="PTHR31739">
    <property type="entry name" value="ENT-COPALYL DIPHOSPHATE SYNTHASE, CHLOROPLASTIC"/>
    <property type="match status" value="1"/>
</dbReference>
<dbReference type="SUPFAM" id="SSF48239">
    <property type="entry name" value="Terpenoid cyclases/Protein prenyltransferases"/>
    <property type="match status" value="1"/>
</dbReference>
<name>PLE3_CLIPA</name>
<organism>
    <name type="scientific">Clitopilus passeckerianus</name>
    <name type="common">Pleurotus passeckerianus</name>
    <dbReference type="NCBI Taxonomy" id="648682"/>
    <lineage>
        <taxon>Eukaryota</taxon>
        <taxon>Fungi</taxon>
        <taxon>Dikarya</taxon>
        <taxon>Basidiomycota</taxon>
        <taxon>Agaricomycotina</taxon>
        <taxon>Agaricomycetes</taxon>
        <taxon>Agaricomycetidae</taxon>
        <taxon>Agaricales</taxon>
        <taxon>Tricholomatineae</taxon>
        <taxon>Entolomataceae</taxon>
        <taxon>Clitopilus</taxon>
    </lineage>
</organism>
<accession>A0A2L0VXR0</accession>
<feature type="chain" id="PRO_0000445371" description="Bifunctional premutilin synthase">
    <location>
        <begin position="1"/>
        <end position="959"/>
    </location>
</feature>
<feature type="region of interest" description="Class II diterpene cyclase" evidence="9">
    <location>
        <begin position="1"/>
        <end position="542"/>
    </location>
</feature>
<feature type="region of interest" description="Class I diterpene synthase" evidence="9">
    <location>
        <begin position="543"/>
        <end position="959"/>
    </location>
</feature>
<feature type="region of interest" description="Disordered" evidence="3">
    <location>
        <begin position="931"/>
        <end position="959"/>
    </location>
</feature>
<feature type="short sequence motif" description="DXDD motif" evidence="9">
    <location>
        <begin position="309"/>
        <end position="312"/>
    </location>
</feature>
<feature type="short sequence motif" description="DDXXD motif" evidence="9">
    <location>
        <begin position="649"/>
        <end position="653"/>
    </location>
</feature>
<feature type="compositionally biased region" description="Polar residues" evidence="3">
    <location>
        <begin position="940"/>
        <end position="959"/>
    </location>
</feature>
<feature type="active site" description="For class II diterpene cyclase activity" evidence="5">
    <location>
        <position position="311"/>
    </location>
</feature>
<feature type="active site" description="For class I diterpene synthase activity" evidence="5">
    <location>
        <position position="649"/>
    </location>
</feature>
<feature type="binding site" evidence="2">
    <location>
        <position position="649"/>
    </location>
    <ligand>
        <name>Mg(2+)</name>
        <dbReference type="ChEBI" id="CHEBI:18420"/>
        <label>1</label>
    </ligand>
</feature>
<feature type="binding site" evidence="2">
    <location>
        <position position="649"/>
    </location>
    <ligand>
        <name>Mg(2+)</name>
        <dbReference type="ChEBI" id="CHEBI:18420"/>
        <label>2</label>
    </ligand>
</feature>
<feature type="binding site" evidence="2">
    <location>
        <position position="653"/>
    </location>
    <ligand>
        <name>Mg(2+)</name>
        <dbReference type="ChEBI" id="CHEBI:18420"/>
        <label>1</label>
    </ligand>
</feature>
<feature type="binding site" evidence="2">
    <location>
        <position position="653"/>
    </location>
    <ligand>
        <name>Mg(2+)</name>
        <dbReference type="ChEBI" id="CHEBI:18420"/>
        <label>2</label>
    </ligand>
</feature>
<feature type="binding site" evidence="2">
    <location>
        <position position="824"/>
    </location>
    <ligand>
        <name>Mg(2+)</name>
        <dbReference type="ChEBI" id="CHEBI:18420"/>
        <label>3</label>
    </ligand>
</feature>
<feature type="mutagenesis site" description="Blocks class II DTC activity and abolishes the production of premutilin." evidence="5">
    <original>D</original>
    <variation>A</variation>
    <location>
        <position position="311"/>
    </location>
</feature>
<feature type="mutagenesis site" description="Completely blocks class I DTS activity, abolishes the production of premutilin, and leads to the accumulation of mutildienyl-diphosphate." evidence="5">
    <original>D</original>
    <variation>L</variation>
    <location>
        <position position="649"/>
    </location>
</feature>
<comment type="function">
    <text evidence="1 4 5">Bifunctional premutilin synthase; part of the gene cluster that mediates the biosynthesis of pleuromutilin, a tricyclic diterpene showing antibacterial properties (PubMed:27143514, PubMed:29388775). The geranylgeranyl diphosphate (GGPP) synthase catalyzes the first step in pleuromutilin biosynthesis (PubMed:27143514, PubMed:29388775). GGPP is then substrate of the premutilin synthase (PS) to yield premutilin (PubMed:29388775). Premutilin synthase is a bifunctional enzyme composed of the fusion of a class II diterpene cyclase (DTC) and a class I diterpene synthase (DTS), with the corresponding domains and active sites containing characteristic aspartate-rich motifs. GGPP is first converted to mutildienyl-diphosphate (MPP) at the class II DTC site (PubMed:29388775). MPP is subsequently further cyclized at the class I DTS site, followed by a 1,5-hydride shift and addition of water prior to terminating deprotonation, to yield premutilin (PubMed:29388775). In addition to the aforementioned GGPP synthase and bifunctional diterpene synthase, the cluster also contains three cytochrome P450 monooxygenases, a short-chain alcohol dehydrogenase, and an acyltransferase, involved in the conversion of premutilin to pleuromutilin (PubMed:27143514, PubMed:29388775). The cytochrome P450 monooxygenases P450-1 and P450-2 hydroxylate premutilin at C-11 and C-3, respectively, producing 11-hydroxypremutilin and 3-hydroxypremutilin (By similarity). The combination of the actions of both ple5 and ple6 leads to the production of 3,11-dihydroxypremutilin (By similarity). The short chain dehydrogenase SDR further converts 3,11-dihydroxypremutilin into mutilin (By similarity). The acetyltransferase ATF then acetylates mutilin to produce 14-O-acetylmutilin (By similarity). Finally, the cytochrome P450 monooxygenase P450-3 catalyzes hydroxylation on the alpha position of the acetyl side chain of 14-O-acetylmutilin to yield pleuromutilin (By similarity).</text>
</comment>
<comment type="cofactor">
    <cofactor evidence="2">
        <name>Mg(2+)</name>
        <dbReference type="ChEBI" id="CHEBI:18420"/>
    </cofactor>
    <text evidence="2">Binds 3 Mg(2+) ions per subunit.</text>
</comment>
<comment type="pathway">
    <text evidence="4 5">Secondary metabolite biosynthesis; terpenoid biosynthesis.</text>
</comment>
<comment type="induction">
    <text evidence="4">Expression is up-regulated during pleuromutilin production.</text>
</comment>
<comment type="domain">
    <text evidence="5">The class II DTC active site contains a DXDD motif from which the middle Asp acts as the catalytic acid in this protonation-initiated cyclization reaction, while the class I DTS active site contains a DDXXD motif that binds divalent magnesium cofactors required for the catalyzed allylic diphosphate ester ionization-initiated reaction, with the first Asp playing a particularly key role.</text>
</comment>
<comment type="similarity">
    <text evidence="8">Belongs to the terpene synthase family.</text>
</comment>
<evidence type="ECO:0000250" key="1">
    <source>
        <dbReference type="UniProtKB" id="A0A6S6QR11"/>
    </source>
</evidence>
<evidence type="ECO:0000250" key="2">
    <source>
        <dbReference type="UniProtKB" id="Q40577"/>
    </source>
</evidence>
<evidence type="ECO:0000256" key="3">
    <source>
        <dbReference type="SAM" id="MobiDB-lite"/>
    </source>
</evidence>
<evidence type="ECO:0000269" key="4">
    <source>
    </source>
</evidence>
<evidence type="ECO:0000269" key="5">
    <source>
    </source>
</evidence>
<evidence type="ECO:0000303" key="6">
    <source>
    </source>
</evidence>
<evidence type="ECO:0000303" key="7">
    <source>
    </source>
</evidence>
<evidence type="ECO:0000305" key="8"/>
<evidence type="ECO:0000305" key="9">
    <source>
    </source>
</evidence>
<keyword id="KW-0045">Antibiotic biosynthesis</keyword>
<keyword id="KW-0413">Isomerase</keyword>
<keyword id="KW-0456">Lyase</keyword>
<keyword id="KW-0460">Magnesium</keyword>
<keyword id="KW-0479">Metal-binding</keyword>
<reference key="1">
    <citation type="journal article" date="2016" name="Sci. Rep.">
        <title>Identification and manipulation of the pleuromutilin gene cluster from Clitopilus passeckerianus for increased rapid antibiotic production.</title>
        <authorList>
            <person name="Bailey A.M."/>
            <person name="Alberti F."/>
            <person name="Kilaru S."/>
            <person name="Collins C.M."/>
            <person name="de Mattos-Shipley K."/>
            <person name="Hartley A.J."/>
            <person name="Hayes P."/>
            <person name="Griffin A."/>
            <person name="Lazarus C.M."/>
            <person name="Cox R.J."/>
            <person name="Willis C.L."/>
            <person name="O'Dwyer K."/>
            <person name="Spence D.W."/>
            <person name="Foster G.D."/>
        </authorList>
    </citation>
    <scope>NUCLEOTIDE SEQUENCE [GENOMIC DNA]</scope>
    <scope>IDENTIFICATION</scope>
    <scope>FUNCTION</scope>
    <scope>INDUCTION</scope>
    <scope>PATHWAY</scope>
</reference>
<reference key="2">
    <citation type="journal article" date="2018" name="Org. Lett.">
        <title>Premutilin synthase: ring rearrangement by a class II diterpene cyclase.</title>
        <authorList>
            <person name="Xu M."/>
            <person name="Jia M."/>
            <person name="Hong Y.J."/>
            <person name="Yin X."/>
            <person name="Tantillo D.J."/>
            <person name="Proteau P.J."/>
            <person name="Peters R.J."/>
        </authorList>
    </citation>
    <scope>NUCLEOTIDE SEQUENCE [MRNA]</scope>
    <scope>FUNCTION</scope>
    <scope>CATALYTIC ACTIVITY</scope>
    <scope>DOMAIN</scope>
    <scope>ACTIVE SITE</scope>
    <scope>MUTAGENESIS OF ASP-311 AND ASP-649</scope>
    <scope>PATHWAY</scope>
</reference>
<protein>
    <recommendedName>
        <fullName evidence="7">Bifunctional premutilin synthase</fullName>
        <shortName evidence="7">PS</shortName>
    </recommendedName>
    <domain>
        <recommendedName>
            <fullName evidence="7">Class II diterpene cyclase</fullName>
            <ecNumber evidence="5">5.5.1.-</ecNumber>
        </recommendedName>
    </domain>
    <domain>
        <recommendedName>
            <fullName evidence="7">Class I diterpene synthase</fullName>
            <ecNumber evidence="5">4.2.3.-</ecNumber>
        </recommendedName>
    </domain>
</protein>
<gene>
    <name evidence="7" type="primary">PS</name>
    <name evidence="6" type="synonym">cyc</name>
</gene>
<sequence>MGLSEDLHARARTLMQTLESALNTPGSRGIGTANPTIYDTAWVAMVSREIDGKQVFVFPETFTYIYEHQEADGSWSGDGSLIDSIVNTLACLVALKMHESNASKPDIPARARAAQNYLDDALKRWDIMETERVAYEMIVPCLLKQLDAFGVSFTFPHHDLLYNMYAGKLAKLNWEAIYAKNSSLLHCMEAFVGVCDFDRMPHLLRDGNFMATPSTTAAYLMKATKWDDRAEDYLRHVIEVYAPHGRDVVPNLWPMTFFEIVWSLSSLYDNNLEFAQMDPECLDRIALKLREFLVAGKGVLGFVPGTTHDADMSSKTLMLLQVLNHPYSHDEFVTEFEAPTYFRCYSFERNASVTVNSNCLMSLLHAPDVNKYESQIVKIATYVADVWWTSAGVVKDKWNVSEWYSSMLSSQALVRLLFEHGKGNLKSISEELLSRVSIACFTMISRILQSQKPDGSWGCAEETSYALITLANVASLPTCDLIRDHLYKVIESAKAYLTPIFYARPAAKPEDRVWIDKVTYSVESFRDAYLVSALNVPIPRFDPSSISTLPAISQTLPKELSKFFGRLDMFKPAPEWRKLTWGIEATLMGPELNRVPSSTFAKVEKGAAGKWFEFLPYMTIAPSSLEGTPISSQGMLDVLVLIRGLYNTDDYLDMTLIKATNEDLDDLKKKIRDLFADPKSFSTLSEVPDDRMPTHIEVIERFAYSLLNHPRAQLASDNDKGLLRSEIEHYFLAGIAQCEENILLRERGLDKERIGTSHYRWTHVVGADNVAGTIALVFALCLLGHQINEERGSRDLVDVFPSPVLKYLFNDCVMHFGTFSRLANDLHSISRDFNEVNLNSIMFSEFTGPKSGTDTEKAREAALLELTKFERKATDDGFEYLVQQLTPHVGAKRARDYINIIRVTYLHTALYDDLGRLTRADISNANQEVSKGTNGVKKINGSSTNGTKVTANGSNGIHH</sequence>